<organism>
    <name type="scientific">Shigella sonnei</name>
    <dbReference type="NCBI Taxonomy" id="624"/>
    <lineage>
        <taxon>Bacteria</taxon>
        <taxon>Pseudomonadati</taxon>
        <taxon>Pseudomonadota</taxon>
        <taxon>Gammaproteobacteria</taxon>
        <taxon>Enterobacterales</taxon>
        <taxon>Enterobacteriaceae</taxon>
        <taxon>Shigella</taxon>
    </lineage>
</organism>
<evidence type="ECO:0000255" key="1"/>
<evidence type="ECO:0000256" key="2">
    <source>
        <dbReference type="SAM" id="MobiDB-lite"/>
    </source>
</evidence>
<evidence type="ECO:0000305" key="3"/>
<name>CEA1_SHISO</name>
<accession>P21178</accession>
<geneLocation type="plasmid">
    <name>pKY-1</name>
</geneLocation>
<dbReference type="EMBL" id="M37218">
    <property type="protein sequence ID" value="AAA98156.1"/>
    <property type="molecule type" value="Genomic_DNA"/>
</dbReference>
<dbReference type="PIR" id="S06218">
    <property type="entry name" value="S06218"/>
</dbReference>
<dbReference type="SMR" id="P21178"/>
<dbReference type="STRING" id="216599.GCA_000283715_05362"/>
<dbReference type="GO" id="GO:0005886">
    <property type="term" value="C:plasma membrane"/>
    <property type="evidence" value="ECO:0007669"/>
    <property type="project" value="UniProtKB-SubCell"/>
</dbReference>
<dbReference type="GO" id="GO:0140911">
    <property type="term" value="F:pore-forming activity"/>
    <property type="evidence" value="ECO:0007669"/>
    <property type="project" value="InterPro"/>
</dbReference>
<dbReference type="GO" id="GO:0050829">
    <property type="term" value="P:defense response to Gram-negative bacterium"/>
    <property type="evidence" value="ECO:0007669"/>
    <property type="project" value="InterPro"/>
</dbReference>
<dbReference type="GO" id="GO:0031640">
    <property type="term" value="P:killing of cells of another organism"/>
    <property type="evidence" value="ECO:0007669"/>
    <property type="project" value="UniProtKB-KW"/>
</dbReference>
<dbReference type="FunFam" id="1.10.490.30:FF:000002">
    <property type="entry name" value="Colicin-E1"/>
    <property type="match status" value="1"/>
</dbReference>
<dbReference type="Gene3D" id="1.10.490.30">
    <property type="entry name" value="Colicin"/>
    <property type="match status" value="1"/>
</dbReference>
<dbReference type="Gene3D" id="1.10.287.620">
    <property type="entry name" value="Helix Hairpins"/>
    <property type="match status" value="1"/>
</dbReference>
<dbReference type="InterPro" id="IPR000293">
    <property type="entry name" value="Channel_colicin_C"/>
</dbReference>
<dbReference type="InterPro" id="IPR038283">
    <property type="entry name" value="Channel_colicin_C_sf"/>
</dbReference>
<dbReference type="Pfam" id="PF01024">
    <property type="entry name" value="Colicin"/>
    <property type="match status" value="1"/>
</dbReference>
<dbReference type="PRINTS" id="PR00280">
    <property type="entry name" value="CHANLCOLICIN"/>
</dbReference>
<dbReference type="SUPFAM" id="SSF56837">
    <property type="entry name" value="Colicin"/>
    <property type="match status" value="1"/>
</dbReference>
<dbReference type="PROSITE" id="PS00276">
    <property type="entry name" value="CHANNEL_COLICIN"/>
    <property type="match status" value="1"/>
</dbReference>
<feature type="chain" id="PRO_0000218669" description="Colicin-E1*">
    <location>
        <begin position="1"/>
        <end position="521"/>
    </location>
</feature>
<feature type="transmembrane region" description="Helical" evidence="1">
    <location>
        <begin position="470"/>
        <end position="486"/>
    </location>
</feature>
<feature type="transmembrane region" description="Helical" evidence="1">
    <location>
        <begin position="493"/>
        <end position="509"/>
    </location>
</feature>
<feature type="region of interest" description="Disordered" evidence="2">
    <location>
        <begin position="26"/>
        <end position="52"/>
    </location>
</feature>
<feature type="region of interest" description="Disordered" evidence="2">
    <location>
        <begin position="127"/>
        <end position="163"/>
    </location>
</feature>
<feature type="compositionally biased region" description="Gly residues" evidence="2">
    <location>
        <begin position="30"/>
        <end position="42"/>
    </location>
</feature>
<feature type="compositionally biased region" description="Basic residues" evidence="2">
    <location>
        <begin position="133"/>
        <end position="145"/>
    </location>
</feature>
<feature type="compositionally biased region" description="Basic and acidic residues" evidence="2">
    <location>
        <begin position="146"/>
        <end position="163"/>
    </location>
</feature>
<reference key="1">
    <citation type="journal article" date="1986" name="J. Gen. Appl. Microbiol.">
        <title>The nucleotide sequence of cea and the region of origin of plasmid pKY-1.</title>
        <authorList>
            <person name="Higashi M."/>
            <person name="Hata M."/>
            <person name="Hase T."/>
            <person name="Yamaguchi K."/>
            <person name="Masamune Y."/>
        </authorList>
    </citation>
    <scope>NUCLEOTIDE SEQUENCE [GENOMIC DNA]</scope>
</reference>
<sequence length="521" mass="57670">METAVAYYKDGVPYDDKGEVIITLLNGNPDGSGSGGGGGTGGSKSESSAAIHATAKWSTAQLKKTQAEQAARAKAAAEAQAKAKANRDALTQHLKDIVNEALRHNSTHPEVIDLLMPIMQRCRQKQSGCALQKQKKKPVKKRKRAEKSFQEAEQRRKEIEKEQAETERQLKLAEDEEKRLAALSEEARAVEVAQKNLAAAQSELAKVDEEINTLNTRLSSSIHARDAETNTLSGKRNELDQASAKYKELDERVKLLSPRANDPLQSRPFFEATRLRARRGDEMEEKQKQVTATETRLNQISSEINGIQEAISQANNKRSTAVSRIHDAEDNLKTAQTNLLNSQIKDAVDATVSFYQTLSEKYGEKYSKMAQELADKSKGKKISNVNEALAAFEKYKDVLNKKFSKADRDAIFNALEAVKYEDWAKHLDQFAKYLKITGHVSFGYDVVSDILKIKDTGDWKPLFLTLEKKAVDAGVSYVVVLLFSVLAGTTLGIWGIAIVTGILCAFIDKNKLNTINEVLGI</sequence>
<proteinExistence type="inferred from homology"/>
<gene>
    <name type="primary">cea</name>
</gene>
<comment type="function">
    <text>This colicin is a channel-forming colicin. This class of transmembrane toxins depolarize the cytoplasmic membrane, leading to dissipation of cellular energy.</text>
</comment>
<comment type="function">
    <text>Colicins are polypeptide toxins produced by and active against E.coli and closely related bacteria.</text>
</comment>
<comment type="subcellular location">
    <subcellularLocation>
        <location evidence="3">Cell membrane</location>
        <topology evidence="3">Multi-pass membrane protein</topology>
    </subcellularLocation>
</comment>
<comment type="similarity">
    <text evidence="3">Belongs to the channel forming colicin family.</text>
</comment>
<protein>
    <recommendedName>
        <fullName>Colicin-E1*</fullName>
    </recommendedName>
</protein>
<keyword id="KW-0044">Antibiotic</keyword>
<keyword id="KW-0929">Antimicrobial</keyword>
<keyword id="KW-0078">Bacteriocin</keyword>
<keyword id="KW-1003">Cell membrane</keyword>
<keyword id="KW-0472">Membrane</keyword>
<keyword id="KW-0614">Plasmid</keyword>
<keyword id="KW-0812">Transmembrane</keyword>
<keyword id="KW-1133">Transmembrane helix</keyword>